<dbReference type="EMBL" id="CP000936">
    <property type="protein sequence ID" value="ACA37149.1"/>
    <property type="molecule type" value="Genomic_DNA"/>
</dbReference>
<dbReference type="RefSeq" id="WP_000568640.1">
    <property type="nucleotide sequence ID" value="NC_010380.1"/>
</dbReference>
<dbReference type="SMR" id="B1I9M6"/>
<dbReference type="GeneID" id="49599200"/>
<dbReference type="KEGG" id="spv:SPH_0541"/>
<dbReference type="HOGENOM" id="CLU_074944_3_0_9"/>
<dbReference type="UniPathway" id="UPA00345"/>
<dbReference type="Proteomes" id="UP000002163">
    <property type="component" value="Chromosome"/>
</dbReference>
<dbReference type="GO" id="GO:0005737">
    <property type="term" value="C:cytoplasm"/>
    <property type="evidence" value="ECO:0007669"/>
    <property type="project" value="UniProtKB-SubCell"/>
</dbReference>
<dbReference type="GO" id="GO:0003746">
    <property type="term" value="F:translation elongation factor activity"/>
    <property type="evidence" value="ECO:0007669"/>
    <property type="project" value="UniProtKB-UniRule"/>
</dbReference>
<dbReference type="GO" id="GO:0043043">
    <property type="term" value="P:peptide biosynthetic process"/>
    <property type="evidence" value="ECO:0007669"/>
    <property type="project" value="InterPro"/>
</dbReference>
<dbReference type="CDD" id="cd04470">
    <property type="entry name" value="S1_EF-P_repeat_1"/>
    <property type="match status" value="1"/>
</dbReference>
<dbReference type="CDD" id="cd05794">
    <property type="entry name" value="S1_EF-P_repeat_2"/>
    <property type="match status" value="1"/>
</dbReference>
<dbReference type="FunFam" id="2.30.30.30:FF:000003">
    <property type="entry name" value="Elongation factor P"/>
    <property type="match status" value="1"/>
</dbReference>
<dbReference type="FunFam" id="2.40.50.140:FF:000004">
    <property type="entry name" value="Elongation factor P"/>
    <property type="match status" value="1"/>
</dbReference>
<dbReference type="FunFam" id="2.40.50.140:FF:000009">
    <property type="entry name" value="Elongation factor P"/>
    <property type="match status" value="1"/>
</dbReference>
<dbReference type="Gene3D" id="2.30.30.30">
    <property type="match status" value="1"/>
</dbReference>
<dbReference type="Gene3D" id="2.40.50.140">
    <property type="entry name" value="Nucleic acid-binding proteins"/>
    <property type="match status" value="2"/>
</dbReference>
<dbReference type="HAMAP" id="MF_00141">
    <property type="entry name" value="EF_P"/>
    <property type="match status" value="1"/>
</dbReference>
<dbReference type="InterPro" id="IPR015365">
    <property type="entry name" value="Elong-fact-P_C"/>
</dbReference>
<dbReference type="InterPro" id="IPR012340">
    <property type="entry name" value="NA-bd_OB-fold"/>
</dbReference>
<dbReference type="InterPro" id="IPR014722">
    <property type="entry name" value="Rib_uL2_dom2"/>
</dbReference>
<dbReference type="InterPro" id="IPR020599">
    <property type="entry name" value="Transl_elong_fac_P/YeiP"/>
</dbReference>
<dbReference type="InterPro" id="IPR013185">
    <property type="entry name" value="Transl_elong_KOW-like"/>
</dbReference>
<dbReference type="InterPro" id="IPR001059">
    <property type="entry name" value="Transl_elong_P/YeiP_cen"/>
</dbReference>
<dbReference type="InterPro" id="IPR013852">
    <property type="entry name" value="Transl_elong_P/YeiP_CS"/>
</dbReference>
<dbReference type="InterPro" id="IPR011768">
    <property type="entry name" value="Transl_elongation_fac_P"/>
</dbReference>
<dbReference type="InterPro" id="IPR008991">
    <property type="entry name" value="Translation_prot_SH3-like_sf"/>
</dbReference>
<dbReference type="NCBIfam" id="TIGR00038">
    <property type="entry name" value="efp"/>
    <property type="match status" value="1"/>
</dbReference>
<dbReference type="NCBIfam" id="NF001810">
    <property type="entry name" value="PRK00529.1"/>
    <property type="match status" value="1"/>
</dbReference>
<dbReference type="PANTHER" id="PTHR30053">
    <property type="entry name" value="ELONGATION FACTOR P"/>
    <property type="match status" value="1"/>
</dbReference>
<dbReference type="PANTHER" id="PTHR30053:SF12">
    <property type="entry name" value="ELONGATION FACTOR P (EF-P) FAMILY PROTEIN"/>
    <property type="match status" value="1"/>
</dbReference>
<dbReference type="Pfam" id="PF01132">
    <property type="entry name" value="EFP"/>
    <property type="match status" value="1"/>
</dbReference>
<dbReference type="Pfam" id="PF08207">
    <property type="entry name" value="EFP_N"/>
    <property type="match status" value="1"/>
</dbReference>
<dbReference type="Pfam" id="PF09285">
    <property type="entry name" value="Elong-fact-P_C"/>
    <property type="match status" value="1"/>
</dbReference>
<dbReference type="PIRSF" id="PIRSF005901">
    <property type="entry name" value="EF-P"/>
    <property type="match status" value="1"/>
</dbReference>
<dbReference type="SMART" id="SM01185">
    <property type="entry name" value="EFP"/>
    <property type="match status" value="1"/>
</dbReference>
<dbReference type="SMART" id="SM00841">
    <property type="entry name" value="Elong-fact-P_C"/>
    <property type="match status" value="1"/>
</dbReference>
<dbReference type="SUPFAM" id="SSF50249">
    <property type="entry name" value="Nucleic acid-binding proteins"/>
    <property type="match status" value="2"/>
</dbReference>
<dbReference type="SUPFAM" id="SSF50104">
    <property type="entry name" value="Translation proteins SH3-like domain"/>
    <property type="match status" value="1"/>
</dbReference>
<dbReference type="PROSITE" id="PS01275">
    <property type="entry name" value="EFP"/>
    <property type="match status" value="1"/>
</dbReference>
<proteinExistence type="inferred from homology"/>
<feature type="chain" id="PRO_1000096212" description="Elongation factor P">
    <location>
        <begin position="1"/>
        <end position="186"/>
    </location>
</feature>
<reference key="1">
    <citation type="journal article" date="2010" name="Genome Biol.">
        <title>Structure and dynamics of the pan-genome of Streptococcus pneumoniae and closely related species.</title>
        <authorList>
            <person name="Donati C."/>
            <person name="Hiller N.L."/>
            <person name="Tettelin H."/>
            <person name="Muzzi A."/>
            <person name="Croucher N.J."/>
            <person name="Angiuoli S.V."/>
            <person name="Oggioni M."/>
            <person name="Dunning Hotopp J.C."/>
            <person name="Hu F.Z."/>
            <person name="Riley D.R."/>
            <person name="Covacci A."/>
            <person name="Mitchell T.J."/>
            <person name="Bentley S.D."/>
            <person name="Kilian M."/>
            <person name="Ehrlich G.D."/>
            <person name="Rappuoli R."/>
            <person name="Moxon E.R."/>
            <person name="Masignani V."/>
        </authorList>
    </citation>
    <scope>NUCLEOTIDE SEQUENCE [LARGE SCALE GENOMIC DNA]</scope>
    <source>
        <strain>Hungary19A-6</strain>
    </source>
</reference>
<sequence length="186" mass="20600">MIEASKLKAGMTFETADGKLIRVLEASHHKPGKGNTIMRMKLRDVRTGSTFDTSYRPEEKFEQAIIETVPAQYLYKMDDTAYFMNTETYDQYEIPVVNVENELLYILENSDVKIQFYGTEVIGVTVPTTVELTVAETQPSIKGATVTGSGKPATMETGLVVNVPDFIEAGQKLVINTAEGTYVSRA</sequence>
<comment type="function">
    <text evidence="1">Involved in peptide bond synthesis. Stimulates efficient translation and peptide-bond synthesis on native or reconstituted 70S ribosomes in vitro. Probably functions indirectly by altering the affinity of the ribosome for aminoacyl-tRNA, thus increasing their reactivity as acceptors for peptidyl transferase.</text>
</comment>
<comment type="pathway">
    <text evidence="1">Protein biosynthesis; polypeptide chain elongation.</text>
</comment>
<comment type="subcellular location">
    <subcellularLocation>
        <location evidence="1">Cytoplasm</location>
    </subcellularLocation>
</comment>
<comment type="similarity">
    <text evidence="1">Belongs to the elongation factor P family.</text>
</comment>
<organism>
    <name type="scientific">Streptococcus pneumoniae (strain Hungary19A-6)</name>
    <dbReference type="NCBI Taxonomy" id="487214"/>
    <lineage>
        <taxon>Bacteria</taxon>
        <taxon>Bacillati</taxon>
        <taxon>Bacillota</taxon>
        <taxon>Bacilli</taxon>
        <taxon>Lactobacillales</taxon>
        <taxon>Streptococcaceae</taxon>
        <taxon>Streptococcus</taxon>
    </lineage>
</organism>
<keyword id="KW-0963">Cytoplasm</keyword>
<keyword id="KW-0251">Elongation factor</keyword>
<keyword id="KW-0648">Protein biosynthesis</keyword>
<gene>
    <name evidence="1" type="primary">efp</name>
    <name type="ordered locus">SPH_0541</name>
</gene>
<protein>
    <recommendedName>
        <fullName evidence="1">Elongation factor P</fullName>
        <shortName evidence="1">EF-P</shortName>
    </recommendedName>
</protein>
<name>EFP_STRPI</name>
<accession>B1I9M6</accession>
<evidence type="ECO:0000255" key="1">
    <source>
        <dbReference type="HAMAP-Rule" id="MF_00141"/>
    </source>
</evidence>